<evidence type="ECO:0000255" key="1"/>
<evidence type="ECO:0000269" key="2">
    <source>
    </source>
</evidence>
<evidence type="ECO:0000305" key="3"/>
<evidence type="ECO:0007829" key="4">
    <source>
        <dbReference type="PDB" id="5E5Y"/>
    </source>
</evidence>
<accession>Q948Z4</accession>
<accession>Q9ZTX6</accession>
<keyword id="KW-0002">3D-structure</keyword>
<keyword id="KW-0929">Antimicrobial</keyword>
<keyword id="KW-0134">Cell wall</keyword>
<keyword id="KW-0903">Direct protein sequencing</keyword>
<keyword id="KW-1015">Disulfide bond</keyword>
<keyword id="KW-0611">Plant defense</keyword>
<keyword id="KW-1185">Reference proteome</keyword>
<keyword id="KW-0964">Secreted</keyword>
<keyword id="KW-0732">Signal</keyword>
<feature type="signal peptide" evidence="1">
    <location>
        <begin position="1"/>
        <end position="25"/>
    </location>
</feature>
<feature type="chain" id="PRO_0000348599" description="Snakin-1">
    <location>
        <begin position="26"/>
        <end position="88"/>
    </location>
</feature>
<feature type="sequence conflict" description="In Ref. 1; AA sequence." evidence="3" ref="1">
    <original>S</original>
    <variation>N</variation>
    <location>
        <position position="28"/>
    </location>
</feature>
<feature type="helix" evidence="4">
    <location>
        <begin position="29"/>
        <end position="37"/>
    </location>
</feature>
<feature type="turn" evidence="4">
    <location>
        <begin position="38"/>
        <end position="40"/>
    </location>
</feature>
<feature type="helix" evidence="4">
    <location>
        <begin position="44"/>
        <end position="58"/>
    </location>
</feature>
<feature type="strand" evidence="4">
    <location>
        <begin position="63"/>
        <end position="66"/>
    </location>
</feature>
<feature type="helix" evidence="4">
    <location>
        <begin position="69"/>
        <end position="71"/>
    </location>
</feature>
<feature type="helix" evidence="4">
    <location>
        <begin position="73"/>
        <end position="77"/>
    </location>
</feature>
<feature type="strand" evidence="4">
    <location>
        <begin position="83"/>
        <end position="85"/>
    </location>
</feature>
<gene>
    <name type="primary">SN1</name>
</gene>
<name>SNAK1_SOLTU</name>
<sequence>MKLFLLTLLLVTLVITPSLIQTTMAGSSFCDSKCKLRCSKAGLADRCLKYCGICCEECKCVPSGTYGNKHECPCYRDKKNSKGKSKCP</sequence>
<protein>
    <recommendedName>
        <fullName>Snakin-1</fullName>
    </recommendedName>
</protein>
<comment type="function">
    <text evidence="2">Has an antimicrobial activity. Causes a rapid aggregation of both Gram-positive and Gram-negative bacteria, but the antimicrobial activity is not correlated with the capacity to aggregate bacteria.</text>
</comment>
<comment type="subcellular location">
    <subcellularLocation>
        <location>Secreted</location>
        <location>Cell wall</location>
    </subcellularLocation>
</comment>
<comment type="tissue specificity">
    <text evidence="2">Expressed in tubers, stems, axillary and young floral buds, sepals, petals, stamens and carpels, but not in roots, stolons, shoot apex meristem or young leaves.</text>
</comment>
<comment type="induction">
    <text evidence="2">No responses to methyl jasmonate, ethylene, abscisic acid, salicylic acid, isonicotinic acid, indolacetic acid, gibberellic acid and infection with incompatible bacterial or compatible fungual pathogens.</text>
</comment>
<comment type="PTM">
    <text>Six disulfide bonds may be present.</text>
</comment>
<comment type="similarity">
    <text evidence="3">Belongs to the GASA family.</text>
</comment>
<organism>
    <name type="scientific">Solanum tuberosum</name>
    <name type="common">Potato</name>
    <dbReference type="NCBI Taxonomy" id="4113"/>
    <lineage>
        <taxon>Eukaryota</taxon>
        <taxon>Viridiplantae</taxon>
        <taxon>Streptophyta</taxon>
        <taxon>Embryophyta</taxon>
        <taxon>Tracheophyta</taxon>
        <taxon>Spermatophyta</taxon>
        <taxon>Magnoliopsida</taxon>
        <taxon>eudicotyledons</taxon>
        <taxon>Gunneridae</taxon>
        <taxon>Pentapetalae</taxon>
        <taxon>asterids</taxon>
        <taxon>lamiids</taxon>
        <taxon>Solanales</taxon>
        <taxon>Solanaceae</taxon>
        <taxon>Solanoideae</taxon>
        <taxon>Solaneae</taxon>
        <taxon>Solanum</taxon>
    </lineage>
</organism>
<proteinExistence type="evidence at protein level"/>
<dbReference type="EMBL" id="AF014396">
    <property type="protein sequence ID" value="AAD01518.1"/>
    <property type="molecule type" value="mRNA"/>
</dbReference>
<dbReference type="EMBL" id="AJ320185">
    <property type="protein sequence ID" value="CAC44032.1"/>
    <property type="molecule type" value="Genomic_DNA"/>
</dbReference>
<dbReference type="PDB" id="5E5Q">
    <property type="method" value="X-ray"/>
    <property type="resolution" value="1.60 A"/>
    <property type="chains" value="A/B=29-88"/>
</dbReference>
<dbReference type="PDB" id="5E5T">
    <property type="method" value="X-ray"/>
    <property type="resolution" value="1.57 A"/>
    <property type="chains" value="A/C=29-88, B/D=26-83"/>
</dbReference>
<dbReference type="PDB" id="5E5Y">
    <property type="method" value="X-ray"/>
    <property type="resolution" value="1.51 A"/>
    <property type="chains" value="A/C=29-88, B/D=26-83"/>
</dbReference>
<dbReference type="PDBsum" id="5E5Q"/>
<dbReference type="PDBsum" id="5E5T"/>
<dbReference type="PDBsum" id="5E5Y"/>
<dbReference type="SMR" id="Q948Z4"/>
<dbReference type="FunCoup" id="Q948Z4">
    <property type="interactions" value="267"/>
</dbReference>
<dbReference type="STRING" id="4113.Q948Z4"/>
<dbReference type="PaxDb" id="4113-PGSC0003DMT400055426"/>
<dbReference type="eggNOG" id="ENOG502S46W">
    <property type="taxonomic scope" value="Eukaryota"/>
</dbReference>
<dbReference type="InParanoid" id="Q948Z4"/>
<dbReference type="Proteomes" id="UP000011115">
    <property type="component" value="Unassembled WGS sequence"/>
</dbReference>
<dbReference type="ExpressionAtlas" id="Q948Z4">
    <property type="expression patterns" value="baseline and differential"/>
</dbReference>
<dbReference type="GO" id="GO:0005576">
    <property type="term" value="C:extracellular region"/>
    <property type="evidence" value="ECO:0007669"/>
    <property type="project" value="UniProtKB-KW"/>
</dbReference>
<dbReference type="GO" id="GO:0006952">
    <property type="term" value="P:defense response"/>
    <property type="evidence" value="ECO:0007669"/>
    <property type="project" value="UniProtKB-KW"/>
</dbReference>
<dbReference type="InterPro" id="IPR003854">
    <property type="entry name" value="GASA"/>
</dbReference>
<dbReference type="PANTHER" id="PTHR23201">
    <property type="entry name" value="EXTENSIN, PROLINE-RICH PROTEIN"/>
    <property type="match status" value="1"/>
</dbReference>
<dbReference type="PANTHER" id="PTHR23201:SF143">
    <property type="entry name" value="SNAKIN-1"/>
    <property type="match status" value="1"/>
</dbReference>
<dbReference type="Pfam" id="PF02704">
    <property type="entry name" value="GASA"/>
    <property type="match status" value="1"/>
</dbReference>
<reference key="1">
    <citation type="journal article" date="1999" name="Mol. Plant Microbe Interact.">
        <title>Snakin-1, a peptide from potato that is active against plant pathogens.</title>
        <authorList>
            <person name="Segura A."/>
            <person name="Moreno M."/>
            <person name="Madueno F."/>
            <person name="Molina A."/>
            <person name="Garcia-Olmedo F."/>
        </authorList>
    </citation>
    <scope>NUCLEOTIDE SEQUENCE [MRNA]</scope>
    <scope>PROTEIN SEQUENCE OF 26-60</scope>
    <scope>FUNCTION</scope>
    <scope>TISSUE SPECIFICITY</scope>
    <scope>INDUCTION</scope>
    <source>
        <strain>cv. Jaerla</strain>
        <tissue>Tuber</tissue>
    </source>
</reference>
<reference key="2">
    <citation type="submission" date="2001-07" db="EMBL/GenBank/DDBJ databases">
        <authorList>
            <person name="Berrocal Lobo M."/>
        </authorList>
    </citation>
    <scope>NUCLEOTIDE SEQUENCE [GENOMIC DNA]</scope>
</reference>